<name>MLTF_SHEDO</name>
<feature type="signal peptide" evidence="1">
    <location>
        <begin position="1"/>
        <end position="20"/>
    </location>
</feature>
<feature type="chain" id="PRO_5000114486" description="Membrane-bound lytic murein transglycosylase F">
    <location>
        <begin position="21"/>
        <end position="494"/>
    </location>
</feature>
<feature type="region of interest" description="Non-LT domain" evidence="1">
    <location>
        <begin position="21"/>
        <end position="259"/>
    </location>
</feature>
<feature type="region of interest" description="LT domain" evidence="1">
    <location>
        <begin position="260"/>
        <end position="494"/>
    </location>
</feature>
<feature type="region of interest" description="Disordered" evidence="2">
    <location>
        <begin position="473"/>
        <end position="494"/>
    </location>
</feature>
<feature type="compositionally biased region" description="Polar residues" evidence="2">
    <location>
        <begin position="473"/>
        <end position="485"/>
    </location>
</feature>
<feature type="active site" evidence="1">
    <location>
        <position position="304"/>
    </location>
</feature>
<accession>Q12PR8</accession>
<comment type="function">
    <text evidence="1">Murein-degrading enzyme that degrades murein glycan strands and insoluble, high-molecular weight murein sacculi, with the concomitant formation of a 1,6-anhydromuramoyl product. Lytic transglycosylases (LTs) play an integral role in the metabolism of the peptidoglycan (PG) sacculus. Their lytic action creates space within the PG sacculus to allow for its expansion as well as for the insertion of various structures such as secretion systems and flagella.</text>
</comment>
<comment type="catalytic activity">
    <reaction evidence="1">
        <text>Exolytic cleavage of the (1-&gt;4)-beta-glycosidic linkage between N-acetylmuramic acid (MurNAc) and N-acetylglucosamine (GlcNAc) residues in peptidoglycan, from either the reducing or the non-reducing ends of the peptidoglycan chains, with concomitant formation of a 1,6-anhydrobond in the MurNAc residue.</text>
        <dbReference type="EC" id="4.2.2.n1"/>
    </reaction>
</comment>
<comment type="subcellular location">
    <subcellularLocation>
        <location>Cell outer membrane</location>
        <topology>Peripheral membrane protein</topology>
    </subcellularLocation>
    <text evidence="1">Attached to the inner leaflet of the outer membrane.</text>
</comment>
<comment type="domain">
    <text evidence="1">The N-terminal domain does not have lytic activity and probably modulates enzymatic activity. The C-terminal domain is the catalytic active domain.</text>
</comment>
<comment type="similarity">
    <text evidence="1">In the N-terminal section; belongs to the bacterial solute-binding protein 3 family.</text>
</comment>
<comment type="similarity">
    <text evidence="1">In the C-terminal section; belongs to the transglycosylase Slt family.</text>
</comment>
<keyword id="KW-0998">Cell outer membrane</keyword>
<keyword id="KW-0961">Cell wall biogenesis/degradation</keyword>
<keyword id="KW-0456">Lyase</keyword>
<keyword id="KW-0472">Membrane</keyword>
<keyword id="KW-1185">Reference proteome</keyword>
<keyword id="KW-0732">Signal</keyword>
<evidence type="ECO:0000255" key="1">
    <source>
        <dbReference type="HAMAP-Rule" id="MF_02016"/>
    </source>
</evidence>
<evidence type="ECO:0000256" key="2">
    <source>
        <dbReference type="SAM" id="MobiDB-lite"/>
    </source>
</evidence>
<dbReference type="EC" id="4.2.2.n1" evidence="1"/>
<dbReference type="EMBL" id="CP000302">
    <property type="protein sequence ID" value="ABE54558.1"/>
    <property type="molecule type" value="Genomic_DNA"/>
</dbReference>
<dbReference type="RefSeq" id="WP_011495717.1">
    <property type="nucleotide sequence ID" value="NC_007954.1"/>
</dbReference>
<dbReference type="SMR" id="Q12PR8"/>
<dbReference type="STRING" id="318161.Sden_1272"/>
<dbReference type="CAZy" id="GH23">
    <property type="family name" value="Glycoside Hydrolase Family 23"/>
</dbReference>
<dbReference type="KEGG" id="sdn:Sden_1272"/>
<dbReference type="eggNOG" id="COG4623">
    <property type="taxonomic scope" value="Bacteria"/>
</dbReference>
<dbReference type="HOGENOM" id="CLU_027494_0_1_6"/>
<dbReference type="OrthoDB" id="9815002at2"/>
<dbReference type="Proteomes" id="UP000001982">
    <property type="component" value="Chromosome"/>
</dbReference>
<dbReference type="GO" id="GO:0009279">
    <property type="term" value="C:cell outer membrane"/>
    <property type="evidence" value="ECO:0007669"/>
    <property type="project" value="UniProtKB-SubCell"/>
</dbReference>
<dbReference type="GO" id="GO:0008933">
    <property type="term" value="F:peptidoglycan lytic transglycosylase activity"/>
    <property type="evidence" value="ECO:0007669"/>
    <property type="project" value="UniProtKB-UniRule"/>
</dbReference>
<dbReference type="GO" id="GO:0016998">
    <property type="term" value="P:cell wall macromolecule catabolic process"/>
    <property type="evidence" value="ECO:0007669"/>
    <property type="project" value="UniProtKB-UniRule"/>
</dbReference>
<dbReference type="GO" id="GO:0071555">
    <property type="term" value="P:cell wall organization"/>
    <property type="evidence" value="ECO:0007669"/>
    <property type="project" value="UniProtKB-KW"/>
</dbReference>
<dbReference type="GO" id="GO:0009253">
    <property type="term" value="P:peptidoglycan catabolic process"/>
    <property type="evidence" value="ECO:0007669"/>
    <property type="project" value="TreeGrafter"/>
</dbReference>
<dbReference type="CDD" id="cd13403">
    <property type="entry name" value="MLTF-like"/>
    <property type="match status" value="1"/>
</dbReference>
<dbReference type="CDD" id="cd01009">
    <property type="entry name" value="PBP2_YfhD_N"/>
    <property type="match status" value="1"/>
</dbReference>
<dbReference type="FunFam" id="1.10.530.10:FF:000003">
    <property type="entry name" value="Membrane-bound lytic murein transglycosylase F"/>
    <property type="match status" value="1"/>
</dbReference>
<dbReference type="Gene3D" id="1.10.530.10">
    <property type="match status" value="1"/>
</dbReference>
<dbReference type="Gene3D" id="3.40.190.10">
    <property type="entry name" value="Periplasmic binding protein-like II"/>
    <property type="match status" value="2"/>
</dbReference>
<dbReference type="HAMAP" id="MF_02016">
    <property type="entry name" value="MltF"/>
    <property type="match status" value="1"/>
</dbReference>
<dbReference type="InterPro" id="IPR023346">
    <property type="entry name" value="Lysozyme-like_dom_sf"/>
</dbReference>
<dbReference type="InterPro" id="IPR023703">
    <property type="entry name" value="MltF"/>
</dbReference>
<dbReference type="InterPro" id="IPR001638">
    <property type="entry name" value="Solute-binding_3/MltF_N"/>
</dbReference>
<dbReference type="InterPro" id="IPR008258">
    <property type="entry name" value="Transglycosylase_SLT_dom_1"/>
</dbReference>
<dbReference type="NCBIfam" id="NF008112">
    <property type="entry name" value="PRK10859.1"/>
    <property type="match status" value="1"/>
</dbReference>
<dbReference type="PANTHER" id="PTHR35936">
    <property type="entry name" value="MEMBRANE-BOUND LYTIC MUREIN TRANSGLYCOSYLASE F"/>
    <property type="match status" value="1"/>
</dbReference>
<dbReference type="PANTHER" id="PTHR35936:SF32">
    <property type="entry name" value="MEMBRANE-BOUND LYTIC MUREIN TRANSGLYCOSYLASE F"/>
    <property type="match status" value="1"/>
</dbReference>
<dbReference type="Pfam" id="PF00497">
    <property type="entry name" value="SBP_bac_3"/>
    <property type="match status" value="1"/>
</dbReference>
<dbReference type="Pfam" id="PF01464">
    <property type="entry name" value="SLT"/>
    <property type="match status" value="1"/>
</dbReference>
<dbReference type="SMART" id="SM00062">
    <property type="entry name" value="PBPb"/>
    <property type="match status" value="1"/>
</dbReference>
<dbReference type="SUPFAM" id="SSF53955">
    <property type="entry name" value="Lysozyme-like"/>
    <property type="match status" value="1"/>
</dbReference>
<dbReference type="SUPFAM" id="SSF53850">
    <property type="entry name" value="Periplasmic binding protein-like II"/>
    <property type="match status" value="1"/>
</dbReference>
<dbReference type="PROSITE" id="PS51257">
    <property type="entry name" value="PROKAR_LIPOPROTEIN"/>
    <property type="match status" value="1"/>
</dbReference>
<proteinExistence type="inferred from homology"/>
<organism>
    <name type="scientific">Shewanella denitrificans (strain OS217 / ATCC BAA-1090 / DSM 15013)</name>
    <dbReference type="NCBI Taxonomy" id="318161"/>
    <lineage>
        <taxon>Bacteria</taxon>
        <taxon>Pseudomonadati</taxon>
        <taxon>Pseudomonadota</taxon>
        <taxon>Gammaproteobacteria</taxon>
        <taxon>Alteromonadales</taxon>
        <taxon>Shewanellaceae</taxon>
        <taxon>Shewanella</taxon>
    </lineage>
</organism>
<sequence>MIKYLYVILLGLLLSGCQPAEVVEIEASPKAQKRTVLKVGTLYGPQIYVNNSQGETGFDYEMANRFADYLGVSLEMIPFTDRKQLFKALKDNDIDIIAAGIAKTPGRGEQFKMGPTLYKVNQVLVYREGTPEPKDIGTLSGEITVMSNSSSVNTLTQLQKDYPELLWNQVNDKDNEELFALIAKGELNYTISDSNSLLINQRFLPELRAGMILEEKIEVVWLLPPKNSDKLMSQLLAFWHNEQRAGTLEHLNEKYFGHVKRFDYVDTRAFIRAIDNVLPAYRSLFETYSGELDWRKLAAASYQESHWNPNARSKTGVRGMMMLTQPTASYVGVSDRTDAEQSIRGGAIYLKDMIERLPESISDSQRIWFALAAYNIGMGHVEDARRLAVSMDMDPDAWRDVKKVLPLLQQRKYYKQTRYGYARGSQAVHYVDSIRRYYDTLVWVDNQTKKMEVIEAPVEILADKVDANDNIKQSLASDSKTNNTLKPKLGAGQP</sequence>
<reference key="1">
    <citation type="submission" date="2006-03" db="EMBL/GenBank/DDBJ databases">
        <title>Complete sequence of Shewanella denitrificans OS217.</title>
        <authorList>
            <consortium name="US DOE Joint Genome Institute"/>
            <person name="Copeland A."/>
            <person name="Lucas S."/>
            <person name="Lapidus A."/>
            <person name="Barry K."/>
            <person name="Detter J.C."/>
            <person name="Glavina del Rio T."/>
            <person name="Hammon N."/>
            <person name="Israni S."/>
            <person name="Dalin E."/>
            <person name="Tice H."/>
            <person name="Pitluck S."/>
            <person name="Brettin T."/>
            <person name="Bruce D."/>
            <person name="Han C."/>
            <person name="Tapia R."/>
            <person name="Gilna P."/>
            <person name="Kiss H."/>
            <person name="Schmutz J."/>
            <person name="Larimer F."/>
            <person name="Land M."/>
            <person name="Hauser L."/>
            <person name="Kyrpides N."/>
            <person name="Lykidis A."/>
            <person name="Richardson P."/>
        </authorList>
    </citation>
    <scope>NUCLEOTIDE SEQUENCE [LARGE SCALE GENOMIC DNA]</scope>
    <source>
        <strain>OS217 / ATCC BAA-1090 / DSM 15013</strain>
    </source>
</reference>
<gene>
    <name evidence="1" type="primary">mltF</name>
    <name type="ordered locus">Sden_1272</name>
</gene>
<protein>
    <recommendedName>
        <fullName evidence="1">Membrane-bound lytic murein transglycosylase F</fullName>
        <ecNumber evidence="1">4.2.2.n1</ecNumber>
    </recommendedName>
    <alternativeName>
        <fullName evidence="1">Murein lyase F</fullName>
    </alternativeName>
</protein>